<evidence type="ECO:0000255" key="1">
    <source>
        <dbReference type="HAMAP-Rule" id="MF_01006"/>
    </source>
</evidence>
<comment type="function">
    <text evidence="1">Catalyzes the dephosphorylation of undecaprenyl diphosphate (UPP). Confers resistance to bacitracin.</text>
</comment>
<comment type="catalytic activity">
    <reaction evidence="1">
        <text>di-trans,octa-cis-undecaprenyl diphosphate + H2O = di-trans,octa-cis-undecaprenyl phosphate + phosphate + H(+)</text>
        <dbReference type="Rhea" id="RHEA:28094"/>
        <dbReference type="ChEBI" id="CHEBI:15377"/>
        <dbReference type="ChEBI" id="CHEBI:15378"/>
        <dbReference type="ChEBI" id="CHEBI:43474"/>
        <dbReference type="ChEBI" id="CHEBI:58405"/>
        <dbReference type="ChEBI" id="CHEBI:60392"/>
        <dbReference type="EC" id="3.6.1.27"/>
    </reaction>
</comment>
<comment type="subcellular location">
    <subcellularLocation>
        <location evidence="1">Cell inner membrane</location>
        <topology evidence="1">Multi-pass membrane protein</topology>
    </subcellularLocation>
</comment>
<comment type="miscellaneous">
    <text>Bacitracin is thought to be involved in the inhibition of peptidoglycan synthesis by sequestering undecaprenyl diphosphate, thereby reducing the pool of lipid carrier available.</text>
</comment>
<comment type="similarity">
    <text evidence="1">Belongs to the UppP family.</text>
</comment>
<feature type="chain" id="PRO_0000250274" description="Undecaprenyl-diphosphatase">
    <location>
        <begin position="1"/>
        <end position="277"/>
    </location>
</feature>
<feature type="transmembrane region" description="Helical" evidence="1">
    <location>
        <begin position="11"/>
        <end position="31"/>
    </location>
</feature>
<feature type="transmembrane region" description="Helical" evidence="1">
    <location>
        <begin position="47"/>
        <end position="67"/>
    </location>
</feature>
<feature type="transmembrane region" description="Helical" evidence="1">
    <location>
        <begin position="96"/>
        <end position="116"/>
    </location>
</feature>
<feature type="transmembrane region" description="Helical" evidence="1">
    <location>
        <begin position="123"/>
        <end position="143"/>
    </location>
</feature>
<feature type="transmembrane region" description="Helical" evidence="1">
    <location>
        <begin position="153"/>
        <end position="173"/>
    </location>
</feature>
<feature type="transmembrane region" description="Helical" evidence="1">
    <location>
        <begin position="197"/>
        <end position="217"/>
    </location>
</feature>
<feature type="transmembrane region" description="Helical" evidence="1">
    <location>
        <begin position="227"/>
        <end position="247"/>
    </location>
</feature>
<feature type="transmembrane region" description="Helical" evidence="1">
    <location>
        <begin position="254"/>
        <end position="274"/>
    </location>
</feature>
<reference key="1">
    <citation type="journal article" date="2007" name="ISME J.">
        <title>Population level functional diversity in a microbial community revealed by comparative genomic and metagenomic analyses.</title>
        <authorList>
            <person name="Bhaya D."/>
            <person name="Grossman A.R."/>
            <person name="Steunou A.-S."/>
            <person name="Khuri N."/>
            <person name="Cohan F.M."/>
            <person name="Hamamura N."/>
            <person name="Melendrez M.C."/>
            <person name="Bateson M.M."/>
            <person name="Ward D.M."/>
            <person name="Heidelberg J.F."/>
        </authorList>
    </citation>
    <scope>NUCLEOTIDE SEQUENCE [LARGE SCALE GENOMIC DNA]</scope>
    <source>
        <strain>JA-2-3B'a(2-13)</strain>
    </source>
</reference>
<keyword id="KW-0046">Antibiotic resistance</keyword>
<keyword id="KW-0997">Cell inner membrane</keyword>
<keyword id="KW-1003">Cell membrane</keyword>
<keyword id="KW-0133">Cell shape</keyword>
<keyword id="KW-0961">Cell wall biogenesis/degradation</keyword>
<keyword id="KW-0378">Hydrolase</keyword>
<keyword id="KW-0472">Membrane</keyword>
<keyword id="KW-0573">Peptidoglycan synthesis</keyword>
<keyword id="KW-1185">Reference proteome</keyword>
<keyword id="KW-0812">Transmembrane</keyword>
<keyword id="KW-1133">Transmembrane helix</keyword>
<gene>
    <name evidence="1" type="primary">uppP</name>
    <name type="ordered locus">CYB_2055</name>
</gene>
<name>UPPP_SYNJB</name>
<proteinExistence type="inferred from homology"/>
<dbReference type="EC" id="3.6.1.27" evidence="1"/>
<dbReference type="EMBL" id="CP000240">
    <property type="protein sequence ID" value="ABD03002.1"/>
    <property type="molecule type" value="Genomic_DNA"/>
</dbReference>
<dbReference type="RefSeq" id="WP_011433641.1">
    <property type="nucleotide sequence ID" value="NC_007776.1"/>
</dbReference>
<dbReference type="SMR" id="Q2JJZ9"/>
<dbReference type="STRING" id="321332.CYB_2055"/>
<dbReference type="KEGG" id="cyb:CYB_2055"/>
<dbReference type="eggNOG" id="COG1968">
    <property type="taxonomic scope" value="Bacteria"/>
</dbReference>
<dbReference type="HOGENOM" id="CLU_060296_1_0_3"/>
<dbReference type="OrthoDB" id="9808289at2"/>
<dbReference type="Proteomes" id="UP000001938">
    <property type="component" value="Chromosome"/>
</dbReference>
<dbReference type="GO" id="GO:0005886">
    <property type="term" value="C:plasma membrane"/>
    <property type="evidence" value="ECO:0007669"/>
    <property type="project" value="UniProtKB-SubCell"/>
</dbReference>
<dbReference type="GO" id="GO:0050380">
    <property type="term" value="F:undecaprenyl-diphosphatase activity"/>
    <property type="evidence" value="ECO:0007669"/>
    <property type="project" value="UniProtKB-UniRule"/>
</dbReference>
<dbReference type="GO" id="GO:0071555">
    <property type="term" value="P:cell wall organization"/>
    <property type="evidence" value="ECO:0007669"/>
    <property type="project" value="UniProtKB-KW"/>
</dbReference>
<dbReference type="GO" id="GO:0009252">
    <property type="term" value="P:peptidoglycan biosynthetic process"/>
    <property type="evidence" value="ECO:0007669"/>
    <property type="project" value="UniProtKB-KW"/>
</dbReference>
<dbReference type="GO" id="GO:0008360">
    <property type="term" value="P:regulation of cell shape"/>
    <property type="evidence" value="ECO:0007669"/>
    <property type="project" value="UniProtKB-KW"/>
</dbReference>
<dbReference type="GO" id="GO:0046677">
    <property type="term" value="P:response to antibiotic"/>
    <property type="evidence" value="ECO:0007669"/>
    <property type="project" value="UniProtKB-UniRule"/>
</dbReference>
<dbReference type="HAMAP" id="MF_01006">
    <property type="entry name" value="Undec_diphosphatase"/>
    <property type="match status" value="1"/>
</dbReference>
<dbReference type="InterPro" id="IPR003824">
    <property type="entry name" value="UppP"/>
</dbReference>
<dbReference type="NCBIfam" id="NF001394">
    <property type="entry name" value="PRK00281.2-5"/>
    <property type="match status" value="1"/>
</dbReference>
<dbReference type="NCBIfam" id="TIGR00753">
    <property type="entry name" value="undec_PP_bacA"/>
    <property type="match status" value="1"/>
</dbReference>
<dbReference type="PANTHER" id="PTHR30622">
    <property type="entry name" value="UNDECAPRENYL-DIPHOSPHATASE"/>
    <property type="match status" value="1"/>
</dbReference>
<dbReference type="PANTHER" id="PTHR30622:SF4">
    <property type="entry name" value="UNDECAPRENYL-DIPHOSPHATASE"/>
    <property type="match status" value="1"/>
</dbReference>
<dbReference type="Pfam" id="PF02673">
    <property type="entry name" value="BacA"/>
    <property type="match status" value="1"/>
</dbReference>
<protein>
    <recommendedName>
        <fullName evidence="1">Undecaprenyl-diphosphatase</fullName>
        <ecNumber evidence="1">3.6.1.27</ecNumber>
    </recommendedName>
    <alternativeName>
        <fullName evidence="1">Bacitracin resistance protein</fullName>
    </alternativeName>
    <alternativeName>
        <fullName evidence="1">Undecaprenyl pyrophosphate phosphatase</fullName>
    </alternativeName>
</protein>
<accession>Q2JJZ9</accession>
<organism>
    <name type="scientific">Synechococcus sp. (strain JA-2-3B'a(2-13))</name>
    <name type="common">Cyanobacteria bacterium Yellowstone B-Prime</name>
    <dbReference type="NCBI Taxonomy" id="321332"/>
    <lineage>
        <taxon>Bacteria</taxon>
        <taxon>Bacillati</taxon>
        <taxon>Cyanobacteriota</taxon>
        <taxon>Cyanophyceae</taxon>
        <taxon>Synechococcales</taxon>
        <taxon>Synechococcaceae</taxon>
        <taxon>Synechococcus</taxon>
    </lineage>
</organism>
<sequence>MLLADTWYPNWWQALILGMVQGITEFLPISSTAHLRVFPALVGWPDAGASFTAVIQLGSLGAVLIYFASDLRQLILGSWKAWRERDFQQEPWRLSVGILVGTVPIVVAGWAIKAIWGSPPRQLWVIATAAIGLAVLLGWAEQTGKRQRDLHSLGIWDGIWVGLAQALSLIPGVSRSGSTLTAGLFLHLQRSAAARYSFLLGIPALFLAGVVEFISEFEAEALLPQGLGTLSAFVFSYLSIDWLIQFLQRSSTWLFIVYRIGFGLFIILGLALGFLRP</sequence>